<accession>Q91820</accession>
<accession>Q6INY9</accession>
<feature type="chain" id="PRO_0000086695" description="Aurora kinase A-A">
    <location>
        <begin position="1"/>
        <end position="407"/>
    </location>
</feature>
<feature type="domain" description="Protein kinase" evidence="2">
    <location>
        <begin position="140"/>
        <end position="390"/>
    </location>
</feature>
<feature type="region of interest" description="Disordered" evidence="4">
    <location>
        <begin position="1"/>
        <end position="130"/>
    </location>
</feature>
<feature type="region of interest" description="Activation segment" evidence="1">
    <location>
        <begin position="287"/>
        <end position="300"/>
    </location>
</feature>
<feature type="compositionally biased region" description="Basic and acidic residues" evidence="4">
    <location>
        <begin position="1"/>
        <end position="10"/>
    </location>
</feature>
<feature type="compositionally biased region" description="Polar residues" evidence="4">
    <location>
        <begin position="67"/>
        <end position="77"/>
    </location>
</feature>
<feature type="compositionally biased region" description="Polar residues" evidence="4">
    <location>
        <begin position="84"/>
        <end position="110"/>
    </location>
</feature>
<feature type="active site" description="Proton acceptor" evidence="2 3">
    <location>
        <position position="263"/>
    </location>
</feature>
<feature type="binding site" evidence="2">
    <location>
        <position position="150"/>
    </location>
    <ligand>
        <name>ATP</name>
        <dbReference type="ChEBI" id="CHEBI:30616"/>
    </ligand>
</feature>
<feature type="binding site" evidence="8">
    <location>
        <position position="169"/>
    </location>
    <ligand>
        <name>ATP</name>
        <dbReference type="ChEBI" id="CHEBI:30616"/>
    </ligand>
</feature>
<feature type="binding site" evidence="2">
    <location>
        <begin position="217"/>
        <end position="220"/>
    </location>
    <ligand>
        <name>ATP</name>
        <dbReference type="ChEBI" id="CHEBI:30616"/>
    </ligand>
</feature>
<feature type="binding site" evidence="2">
    <location>
        <position position="281"/>
    </location>
    <ligand>
        <name>ATP</name>
        <dbReference type="ChEBI" id="CHEBI:30616"/>
    </ligand>
</feature>
<feature type="mutagenesis site" description="Lacks kinase activity. Disrupts mitotic spindle assembly." evidence="7">
    <original>K</original>
    <variation>R</variation>
    <location>
        <position position="169"/>
    </location>
</feature>
<proteinExistence type="evidence at protein level"/>
<keyword id="KW-0067">ATP-binding</keyword>
<keyword id="KW-0131">Cell cycle</keyword>
<keyword id="KW-0132">Cell division</keyword>
<keyword id="KW-0963">Cytoplasm</keyword>
<keyword id="KW-0206">Cytoskeleton</keyword>
<keyword id="KW-0418">Kinase</keyword>
<keyword id="KW-0493">Microtubule</keyword>
<keyword id="KW-0498">Mitosis</keyword>
<keyword id="KW-0547">Nucleotide-binding</keyword>
<keyword id="KW-0597">Phosphoprotein</keyword>
<keyword id="KW-1185">Reference proteome</keyword>
<keyword id="KW-0723">Serine/threonine-protein kinase</keyword>
<keyword id="KW-0808">Transferase</keyword>
<gene>
    <name type="primary">aurka-a</name>
    <name type="synonym">aurka</name>
    <name type="synonym">eg2</name>
    <name type="synonym">stk6</name>
</gene>
<evidence type="ECO:0000250" key="1">
    <source>
        <dbReference type="UniProtKB" id="O14965"/>
    </source>
</evidence>
<evidence type="ECO:0000255" key="2">
    <source>
        <dbReference type="PROSITE-ProRule" id="PRU00159"/>
    </source>
</evidence>
<evidence type="ECO:0000255" key="3">
    <source>
        <dbReference type="PROSITE-ProRule" id="PRU10027"/>
    </source>
</evidence>
<evidence type="ECO:0000256" key="4">
    <source>
        <dbReference type="SAM" id="MobiDB-lite"/>
    </source>
</evidence>
<evidence type="ECO:0000269" key="5">
    <source>
    </source>
</evidence>
<evidence type="ECO:0000269" key="6">
    <source>
    </source>
</evidence>
<evidence type="ECO:0000269" key="7">
    <source>
    </source>
</evidence>
<evidence type="ECO:0000305" key="8"/>
<reference key="1">
    <citation type="journal article" date="1998" name="J. Cell Sci.">
        <title>The Xenopus protein kinase pEg2 associates with the centrosome in a cell cycle-dependent manner, binds to the spindle microtubules and is involved in bipolar mitotic spindle assembly.</title>
        <authorList>
            <person name="Roghi C."/>
            <person name="Giet R."/>
            <person name="Uzbekov R."/>
            <person name="Morin N."/>
            <person name="Chartrain I."/>
            <person name="Le Guellec R."/>
            <person name="Couturier A."/>
            <person name="Doree M."/>
            <person name="Phillippe M."/>
            <person name="Prigent C."/>
        </authorList>
    </citation>
    <scope>NUCLEOTIDE SEQUENCE [MRNA]</scope>
    <scope>FUNCTION</scope>
    <scope>CATALYTIC ACTIVITY</scope>
    <scope>AUTOPHOSPHORYLATION</scope>
    <scope>SUBCELLULAR LOCATION</scope>
    <scope>TISSUE SPECIFICITY</scope>
    <scope>DEVELOPMENTAL STAGE</scope>
    <scope>MUTAGENESIS OF LYS-169</scope>
    <source>
        <tissue>Egg</tissue>
    </source>
</reference>
<reference key="2">
    <citation type="submission" date="2004-06" db="EMBL/GenBank/DDBJ databases">
        <authorList>
            <consortium name="NIH - Xenopus Gene Collection (XGC) project"/>
        </authorList>
    </citation>
    <scope>NUCLEOTIDE SEQUENCE [LARGE SCALE MRNA]</scope>
    <source>
        <tissue>Ovary</tissue>
    </source>
</reference>
<reference key="3">
    <citation type="journal article" date="1999" name="J. Biol. Chem.">
        <title>The Xenopus laevis aurora-related protein kinase pEg2 associates with and phosphorylates the kinesin-related protein XlEg5.</title>
        <authorList>
            <person name="Giet R."/>
            <person name="Uzbekov R."/>
            <person name="Cubizolles F."/>
            <person name="Le Guellec K."/>
            <person name="Prigent C."/>
        </authorList>
    </citation>
    <scope>FUNCTION</scope>
    <scope>CATALYTIC ACTIVITY</scope>
    <scope>INTERACTION WITH KIF11</scope>
    <scope>SUBCELLULAR LOCATION</scope>
</reference>
<reference key="4">
    <citation type="journal article" date="2008" name="Mol. Biol. Cell">
        <title>Aurora A phosphorylates MCAK to control ran-dependent spindle bipolarity.</title>
        <authorList>
            <person name="Zhang X."/>
            <person name="Ems-McClung S.C."/>
            <person name="Walczak C.E."/>
        </authorList>
    </citation>
    <scope>FUNCTION</scope>
    <scope>INTERACTION WITH KIF2C</scope>
</reference>
<protein>
    <recommendedName>
        <fullName>Aurora kinase A-A</fullName>
        <ecNumber>2.7.11.1</ecNumber>
    </recommendedName>
    <alternativeName>
        <fullName>Aurora/IPL1-related kinase 1</fullName>
        <shortName>ARK-1</shortName>
        <shortName>Aurora-related kinase 1</shortName>
    </alternativeName>
    <alternativeName>
        <fullName>Serine/threonine-protein kinase 6-A</fullName>
    </alternativeName>
    <alternativeName>
        <fullName>Serine/threonine-protein kinase Eg2-A</fullName>
        <shortName>pEg2</shortName>
    </alternativeName>
    <alternativeName>
        <fullName>Serine/threonine-protein kinase aurora-A</fullName>
    </alternativeName>
    <alternativeName>
        <fullName>p46Eg265</fullName>
    </alternativeName>
</protein>
<comment type="function">
    <text evidence="5 6 7">Mitotic serine/threonine kinases that contributes to the regulation of cell cycle progression. Associates with the centrosome and the spindle microtubules during mitosis and plays a critical role in various mitotic events including the establishment of mitotic spindle, centrosome duplication, centrosome separation as well as maturation, chromosomal alignment, spindle assembly checkpoint, and cytokinesis. Phosphorylates numerous target proteins. Important for microtubule formation and/or stabilization.</text>
</comment>
<comment type="catalytic activity">
    <reaction evidence="5 7">
        <text>L-seryl-[protein] + ATP = O-phospho-L-seryl-[protein] + ADP + H(+)</text>
        <dbReference type="Rhea" id="RHEA:17989"/>
        <dbReference type="Rhea" id="RHEA-COMP:9863"/>
        <dbReference type="Rhea" id="RHEA-COMP:11604"/>
        <dbReference type="ChEBI" id="CHEBI:15378"/>
        <dbReference type="ChEBI" id="CHEBI:29999"/>
        <dbReference type="ChEBI" id="CHEBI:30616"/>
        <dbReference type="ChEBI" id="CHEBI:83421"/>
        <dbReference type="ChEBI" id="CHEBI:456216"/>
        <dbReference type="EC" id="2.7.11.1"/>
    </reaction>
</comment>
<comment type="catalytic activity">
    <reaction evidence="5 7">
        <text>L-threonyl-[protein] + ATP = O-phospho-L-threonyl-[protein] + ADP + H(+)</text>
        <dbReference type="Rhea" id="RHEA:46608"/>
        <dbReference type="Rhea" id="RHEA-COMP:11060"/>
        <dbReference type="Rhea" id="RHEA-COMP:11605"/>
        <dbReference type="ChEBI" id="CHEBI:15378"/>
        <dbReference type="ChEBI" id="CHEBI:30013"/>
        <dbReference type="ChEBI" id="CHEBI:30616"/>
        <dbReference type="ChEBI" id="CHEBI:61977"/>
        <dbReference type="ChEBI" id="CHEBI:456216"/>
        <dbReference type="EC" id="2.7.11.1"/>
    </reaction>
</comment>
<comment type="subunit">
    <text evidence="5 6">Interacts with kif2c and kif11.</text>
</comment>
<comment type="subcellular location">
    <subcellularLocation>
        <location evidence="5 7">Cytoplasm</location>
        <location evidence="5 7">Cytoskeleton</location>
        <location evidence="5 7">Spindle</location>
    </subcellularLocation>
    <subcellularLocation>
        <location evidence="5 7">Cytoplasm</location>
        <location evidence="5 7">Cytoskeleton</location>
        <location evidence="5 7">Microtubule organizing center</location>
        <location evidence="5 7">Centrosome</location>
    </subcellularLocation>
    <text evidence="7">Localizes to the spindle pole during mitosis especially from prophase through anaphase. Partially colocalized with gamma tubulin in the centrosome, from S to M phase.</text>
</comment>
<comment type="tissue specificity">
    <text evidence="7">Highly expressed in ovary and testis.</text>
</comment>
<comment type="developmental stage">
    <text evidence="7">Expressed maternally in oocytes, unfertilized eggs and embryos up to the mid-blastula transition (MBT).</text>
</comment>
<comment type="PTM">
    <text evidence="7">Phosphorylated (PubMed:9454730). Autophosphorylated on a serine residue (PubMed:9454730).</text>
</comment>
<comment type="similarity">
    <text evidence="2">Belongs to the protein kinase superfamily. Ser/Thr protein kinase family. Aurora subfamily.</text>
</comment>
<name>AURAA_XENLA</name>
<dbReference type="EC" id="2.7.11.1"/>
<dbReference type="EMBL" id="Z17207">
    <property type="protein sequence ID" value="CAA78915.1"/>
    <property type="molecule type" value="mRNA"/>
</dbReference>
<dbReference type="EMBL" id="BC072133">
    <property type="protein sequence ID" value="AAH72133.1"/>
    <property type="molecule type" value="mRNA"/>
</dbReference>
<dbReference type="PIR" id="S52243">
    <property type="entry name" value="S52243"/>
</dbReference>
<dbReference type="SMR" id="Q91820"/>
<dbReference type="BioGRID" id="99261">
    <property type="interactions" value="2"/>
</dbReference>
<dbReference type="ELM" id="Q91820"/>
<dbReference type="IntAct" id="Q91820">
    <property type="interactions" value="4"/>
</dbReference>
<dbReference type="BindingDB" id="Q91820"/>
<dbReference type="ChEMBL" id="CHEMBL5169182"/>
<dbReference type="iPTMnet" id="Q91820"/>
<dbReference type="DNASU" id="397925"/>
<dbReference type="GeneID" id="397925"/>
<dbReference type="KEGG" id="xla:397925"/>
<dbReference type="AGR" id="Xenbase:XB-GENE-866460"/>
<dbReference type="CTD" id="397925"/>
<dbReference type="Xenbase" id="XB-GENE-866460">
    <property type="gene designation" value="aurka.L"/>
</dbReference>
<dbReference type="OMA" id="KIMNLMF"/>
<dbReference type="OrthoDB" id="377346at2759"/>
<dbReference type="CD-CODE" id="7B3AF3B0">
    <property type="entry name" value="Centrosome"/>
</dbReference>
<dbReference type="CD-CODE" id="D47533BE">
    <property type="entry name" value="Synthetic Condensate 000286"/>
</dbReference>
<dbReference type="Proteomes" id="UP000186698">
    <property type="component" value="Chromosome 9_10L"/>
</dbReference>
<dbReference type="Bgee" id="397925">
    <property type="expression patterns" value="Expressed in egg cell and 16 other cell types or tissues"/>
</dbReference>
<dbReference type="GO" id="GO:0005813">
    <property type="term" value="C:centrosome"/>
    <property type="evidence" value="ECO:0000314"/>
    <property type="project" value="UniProtKB"/>
</dbReference>
<dbReference type="GO" id="GO:0032133">
    <property type="term" value="C:chromosome passenger complex"/>
    <property type="evidence" value="ECO:0000318"/>
    <property type="project" value="GO_Central"/>
</dbReference>
<dbReference type="GO" id="GO:0005737">
    <property type="term" value="C:cytoplasm"/>
    <property type="evidence" value="ECO:0000314"/>
    <property type="project" value="UniProtKB"/>
</dbReference>
<dbReference type="GO" id="GO:0000776">
    <property type="term" value="C:kinetochore"/>
    <property type="evidence" value="ECO:0000318"/>
    <property type="project" value="GO_Central"/>
</dbReference>
<dbReference type="GO" id="GO:0005634">
    <property type="term" value="C:nucleus"/>
    <property type="evidence" value="ECO:0000318"/>
    <property type="project" value="GO_Central"/>
</dbReference>
<dbReference type="GO" id="GO:0005876">
    <property type="term" value="C:spindle microtubule"/>
    <property type="evidence" value="ECO:0000314"/>
    <property type="project" value="UniProtKB"/>
</dbReference>
<dbReference type="GO" id="GO:0051233">
    <property type="term" value="C:spindle midzone"/>
    <property type="evidence" value="ECO:0000318"/>
    <property type="project" value="GO_Central"/>
</dbReference>
<dbReference type="GO" id="GO:0000922">
    <property type="term" value="C:spindle pole"/>
    <property type="evidence" value="ECO:0000314"/>
    <property type="project" value="UniProtKB"/>
</dbReference>
<dbReference type="GO" id="GO:0005524">
    <property type="term" value="F:ATP binding"/>
    <property type="evidence" value="ECO:0007669"/>
    <property type="project" value="UniProtKB-KW"/>
</dbReference>
<dbReference type="GO" id="GO:0019894">
    <property type="term" value="F:kinesin binding"/>
    <property type="evidence" value="ECO:0000353"/>
    <property type="project" value="UniProtKB"/>
</dbReference>
<dbReference type="GO" id="GO:0008017">
    <property type="term" value="F:microtubule binding"/>
    <property type="evidence" value="ECO:0000314"/>
    <property type="project" value="UniProtKB"/>
</dbReference>
<dbReference type="GO" id="GO:0106310">
    <property type="term" value="F:protein serine kinase activity"/>
    <property type="evidence" value="ECO:0007669"/>
    <property type="project" value="RHEA"/>
</dbReference>
<dbReference type="GO" id="GO:0004674">
    <property type="term" value="F:protein serine/threonine kinase activity"/>
    <property type="evidence" value="ECO:0000314"/>
    <property type="project" value="UniProtKB"/>
</dbReference>
<dbReference type="GO" id="GO:0051301">
    <property type="term" value="P:cell division"/>
    <property type="evidence" value="ECO:0007669"/>
    <property type="project" value="UniProtKB-KW"/>
</dbReference>
<dbReference type="GO" id="GO:0000212">
    <property type="term" value="P:meiotic spindle organization"/>
    <property type="evidence" value="ECO:0007669"/>
    <property type="project" value="InterPro"/>
</dbReference>
<dbReference type="GO" id="GO:0007100">
    <property type="term" value="P:mitotic centrosome separation"/>
    <property type="evidence" value="ECO:0007669"/>
    <property type="project" value="InterPro"/>
</dbReference>
<dbReference type="GO" id="GO:0090307">
    <property type="term" value="P:mitotic spindle assembly"/>
    <property type="evidence" value="ECO:0000315"/>
    <property type="project" value="UniProtKB"/>
</dbReference>
<dbReference type="GO" id="GO:0007052">
    <property type="term" value="P:mitotic spindle organization"/>
    <property type="evidence" value="ECO:0000318"/>
    <property type="project" value="GO_Central"/>
</dbReference>
<dbReference type="GO" id="GO:0018105">
    <property type="term" value="P:peptidyl-serine phosphorylation"/>
    <property type="evidence" value="ECO:0000315"/>
    <property type="project" value="UniProtKB"/>
</dbReference>
<dbReference type="GO" id="GO:0046777">
    <property type="term" value="P:protein autophosphorylation"/>
    <property type="evidence" value="ECO:0000315"/>
    <property type="project" value="UniProtKB"/>
</dbReference>
<dbReference type="GO" id="GO:0032465">
    <property type="term" value="P:regulation of cytokinesis"/>
    <property type="evidence" value="ECO:0000318"/>
    <property type="project" value="GO_Central"/>
</dbReference>
<dbReference type="CDD" id="cd14116">
    <property type="entry name" value="STKc_Aurora-A"/>
    <property type="match status" value="1"/>
</dbReference>
<dbReference type="FunFam" id="3.30.200.20:FF:000042">
    <property type="entry name" value="Aurora kinase A"/>
    <property type="match status" value="1"/>
</dbReference>
<dbReference type="FunFam" id="1.10.510.10:FF:000235">
    <property type="entry name" value="Serine/threonine-protein kinase ark1"/>
    <property type="match status" value="1"/>
</dbReference>
<dbReference type="Gene3D" id="3.30.200.20">
    <property type="entry name" value="Phosphorylase Kinase, domain 1"/>
    <property type="match status" value="1"/>
</dbReference>
<dbReference type="Gene3D" id="1.10.510.10">
    <property type="entry name" value="Transferase(Phosphotransferase) domain 1"/>
    <property type="match status" value="1"/>
</dbReference>
<dbReference type="InterPro" id="IPR030616">
    <property type="entry name" value="Aur-like"/>
</dbReference>
<dbReference type="InterPro" id="IPR030611">
    <property type="entry name" value="AURKA"/>
</dbReference>
<dbReference type="InterPro" id="IPR011009">
    <property type="entry name" value="Kinase-like_dom_sf"/>
</dbReference>
<dbReference type="InterPro" id="IPR000719">
    <property type="entry name" value="Prot_kinase_dom"/>
</dbReference>
<dbReference type="InterPro" id="IPR017441">
    <property type="entry name" value="Protein_kinase_ATP_BS"/>
</dbReference>
<dbReference type="InterPro" id="IPR008271">
    <property type="entry name" value="Ser/Thr_kinase_AS"/>
</dbReference>
<dbReference type="PANTHER" id="PTHR24350">
    <property type="entry name" value="SERINE/THREONINE-PROTEIN KINASE IAL-RELATED"/>
    <property type="match status" value="1"/>
</dbReference>
<dbReference type="Pfam" id="PF00069">
    <property type="entry name" value="Pkinase"/>
    <property type="match status" value="1"/>
</dbReference>
<dbReference type="SMART" id="SM00220">
    <property type="entry name" value="S_TKc"/>
    <property type="match status" value="1"/>
</dbReference>
<dbReference type="SUPFAM" id="SSF56112">
    <property type="entry name" value="Protein kinase-like (PK-like)"/>
    <property type="match status" value="1"/>
</dbReference>
<dbReference type="PROSITE" id="PS00107">
    <property type="entry name" value="PROTEIN_KINASE_ATP"/>
    <property type="match status" value="1"/>
</dbReference>
<dbReference type="PROSITE" id="PS50011">
    <property type="entry name" value="PROTEIN_KINASE_DOM"/>
    <property type="match status" value="1"/>
</dbReference>
<dbReference type="PROSITE" id="PS00108">
    <property type="entry name" value="PROTEIN_KINASE_ST"/>
    <property type="match status" value="1"/>
</dbReference>
<sequence>MERAVKENHKPSNVKIFHPMTEGAKRIPVNQPQSTQFRPPGTAVSAQRILGPSNVPQRVLAQAQKPILSSQKPTTQIPLRPATQGHQSSKPQGPNENRNPQQTSHSSTPNVEKKGSTDQGKTSAVPKEEGKKKQWCLEDFEIGRPLGKGKFGNVYLARERESKFILALKVLFKSQLEKAGVEHQLRREVEIQSHLRHPNILRLYGYFHDASRVYLILDYAPGGELFRELQKCTRFDDQRSAMYIKQLAEALLYCHSKKVIHRDIKPENLLLGSNGELKIADFGWSVHAPSSRRTTLCGTLDYLPPEMIEGRMHDETVDLWSLGVLCYEFLVGKPPFETDTHQETYRRISKVEFQYPPYVSEEARDLVSKLLKHNPNHRLPLKGVLEHPWIIKNSQLKKKDEPLPGAQ</sequence>
<organism>
    <name type="scientific">Xenopus laevis</name>
    <name type="common">African clawed frog</name>
    <dbReference type="NCBI Taxonomy" id="8355"/>
    <lineage>
        <taxon>Eukaryota</taxon>
        <taxon>Metazoa</taxon>
        <taxon>Chordata</taxon>
        <taxon>Craniata</taxon>
        <taxon>Vertebrata</taxon>
        <taxon>Euteleostomi</taxon>
        <taxon>Amphibia</taxon>
        <taxon>Batrachia</taxon>
        <taxon>Anura</taxon>
        <taxon>Pipoidea</taxon>
        <taxon>Pipidae</taxon>
        <taxon>Xenopodinae</taxon>
        <taxon>Xenopus</taxon>
        <taxon>Xenopus</taxon>
    </lineage>
</organism>